<organism>
    <name type="scientific">Serratia proteamaculans (strain 568)</name>
    <dbReference type="NCBI Taxonomy" id="399741"/>
    <lineage>
        <taxon>Bacteria</taxon>
        <taxon>Pseudomonadati</taxon>
        <taxon>Pseudomonadota</taxon>
        <taxon>Gammaproteobacteria</taxon>
        <taxon>Enterobacterales</taxon>
        <taxon>Yersiniaceae</taxon>
        <taxon>Serratia</taxon>
    </lineage>
</organism>
<accession>A8GGW2</accession>
<proteinExistence type="inferred from homology"/>
<keyword id="KW-0687">Ribonucleoprotein</keyword>
<keyword id="KW-0689">Ribosomal protein</keyword>
<keyword id="KW-0694">RNA-binding</keyword>
<keyword id="KW-0699">rRNA-binding</keyword>
<dbReference type="EMBL" id="CP000826">
    <property type="protein sequence ID" value="ABV42352.1"/>
    <property type="molecule type" value="Genomic_DNA"/>
</dbReference>
<dbReference type="SMR" id="A8GGW2"/>
<dbReference type="STRING" id="399741.Spro_3254"/>
<dbReference type="KEGG" id="spe:Spro_3254"/>
<dbReference type="eggNOG" id="COG1825">
    <property type="taxonomic scope" value="Bacteria"/>
</dbReference>
<dbReference type="HOGENOM" id="CLU_137946_0_0_6"/>
<dbReference type="OrthoDB" id="9806411at2"/>
<dbReference type="GO" id="GO:0022625">
    <property type="term" value="C:cytosolic large ribosomal subunit"/>
    <property type="evidence" value="ECO:0007669"/>
    <property type="project" value="TreeGrafter"/>
</dbReference>
<dbReference type="GO" id="GO:0008097">
    <property type="term" value="F:5S rRNA binding"/>
    <property type="evidence" value="ECO:0007669"/>
    <property type="project" value="InterPro"/>
</dbReference>
<dbReference type="GO" id="GO:0003735">
    <property type="term" value="F:structural constituent of ribosome"/>
    <property type="evidence" value="ECO:0007669"/>
    <property type="project" value="InterPro"/>
</dbReference>
<dbReference type="GO" id="GO:0006412">
    <property type="term" value="P:translation"/>
    <property type="evidence" value="ECO:0007669"/>
    <property type="project" value="UniProtKB-UniRule"/>
</dbReference>
<dbReference type="CDD" id="cd00495">
    <property type="entry name" value="Ribosomal_L25_TL5_CTC"/>
    <property type="match status" value="1"/>
</dbReference>
<dbReference type="FunFam" id="2.40.240.10:FF:000002">
    <property type="entry name" value="50S ribosomal protein L25"/>
    <property type="match status" value="1"/>
</dbReference>
<dbReference type="Gene3D" id="2.40.240.10">
    <property type="entry name" value="Ribosomal Protein L25, Chain P"/>
    <property type="match status" value="1"/>
</dbReference>
<dbReference type="HAMAP" id="MF_01336">
    <property type="entry name" value="Ribosomal_bL25"/>
    <property type="match status" value="1"/>
</dbReference>
<dbReference type="InterPro" id="IPR020056">
    <property type="entry name" value="Rbsml_bL25/Gln-tRNA_synth_N"/>
</dbReference>
<dbReference type="InterPro" id="IPR011035">
    <property type="entry name" value="Ribosomal_bL25/Gln-tRNA_synth"/>
</dbReference>
<dbReference type="InterPro" id="IPR020055">
    <property type="entry name" value="Ribosomal_bL25_short"/>
</dbReference>
<dbReference type="InterPro" id="IPR029751">
    <property type="entry name" value="Ribosomal_L25_dom"/>
</dbReference>
<dbReference type="InterPro" id="IPR020930">
    <property type="entry name" value="Ribosomal_uL5_bac-type"/>
</dbReference>
<dbReference type="NCBIfam" id="NF004612">
    <property type="entry name" value="PRK05943.1"/>
    <property type="match status" value="1"/>
</dbReference>
<dbReference type="PANTHER" id="PTHR33284">
    <property type="entry name" value="RIBOSOMAL PROTEIN L25/GLN-TRNA SYNTHETASE, ANTI-CODON-BINDING DOMAIN-CONTAINING PROTEIN"/>
    <property type="match status" value="1"/>
</dbReference>
<dbReference type="PANTHER" id="PTHR33284:SF1">
    <property type="entry name" value="RIBOSOMAL PROTEIN L25_GLN-TRNA SYNTHETASE, ANTI-CODON-BINDING DOMAIN-CONTAINING PROTEIN"/>
    <property type="match status" value="1"/>
</dbReference>
<dbReference type="Pfam" id="PF01386">
    <property type="entry name" value="Ribosomal_L25p"/>
    <property type="match status" value="1"/>
</dbReference>
<dbReference type="SUPFAM" id="SSF50715">
    <property type="entry name" value="Ribosomal protein L25-like"/>
    <property type="match status" value="1"/>
</dbReference>
<name>RL25_SERP5</name>
<evidence type="ECO:0000255" key="1">
    <source>
        <dbReference type="HAMAP-Rule" id="MF_01336"/>
    </source>
</evidence>
<evidence type="ECO:0000305" key="2"/>
<comment type="function">
    <text evidence="1">This is one of the proteins that binds to the 5S RNA in the ribosome where it forms part of the central protuberance.</text>
</comment>
<comment type="subunit">
    <text evidence="1">Part of the 50S ribosomal subunit; part of the 5S rRNA/L5/L18/L25 subcomplex. Contacts the 5S rRNA. Binds to the 5S rRNA independently of L5 and L18.</text>
</comment>
<comment type="similarity">
    <text evidence="1">Belongs to the bacterial ribosomal protein bL25 family.</text>
</comment>
<sequence>MFTINVEVRKDQGKGASRRLRIANKFPAIVYGGEEAPVSIELDHDSVKNMESKPEFYSEAVTLVIDGKETKVKVQAVQRHPFKPKLAHIDFRRV</sequence>
<feature type="chain" id="PRO_1000067633" description="Large ribosomal subunit protein bL25">
    <location>
        <begin position="1"/>
        <end position="94"/>
    </location>
</feature>
<reference key="1">
    <citation type="submission" date="2007-09" db="EMBL/GenBank/DDBJ databases">
        <title>Complete sequence of chromosome of Serratia proteamaculans 568.</title>
        <authorList>
            <consortium name="US DOE Joint Genome Institute"/>
            <person name="Copeland A."/>
            <person name="Lucas S."/>
            <person name="Lapidus A."/>
            <person name="Barry K."/>
            <person name="Glavina del Rio T."/>
            <person name="Dalin E."/>
            <person name="Tice H."/>
            <person name="Pitluck S."/>
            <person name="Chain P."/>
            <person name="Malfatti S."/>
            <person name="Shin M."/>
            <person name="Vergez L."/>
            <person name="Schmutz J."/>
            <person name="Larimer F."/>
            <person name="Land M."/>
            <person name="Hauser L."/>
            <person name="Kyrpides N."/>
            <person name="Kim E."/>
            <person name="Taghavi S."/>
            <person name="Newman L."/>
            <person name="Vangronsveld J."/>
            <person name="van der Lelie D."/>
            <person name="Richardson P."/>
        </authorList>
    </citation>
    <scope>NUCLEOTIDE SEQUENCE [LARGE SCALE GENOMIC DNA]</scope>
    <source>
        <strain>568</strain>
    </source>
</reference>
<protein>
    <recommendedName>
        <fullName evidence="1">Large ribosomal subunit protein bL25</fullName>
    </recommendedName>
    <alternativeName>
        <fullName evidence="2">50S ribosomal protein L25</fullName>
    </alternativeName>
</protein>
<gene>
    <name evidence="1" type="primary">rplY</name>
    <name type="ordered locus">Spro_3254</name>
</gene>